<dbReference type="EMBL" id="AL939131">
    <property type="protein sequence ID" value="CAB76346.1"/>
    <property type="molecule type" value="Genomic_DNA"/>
</dbReference>
<dbReference type="RefSeq" id="NP_631476.1">
    <property type="nucleotide sequence ID" value="NC_003888.3"/>
</dbReference>
<dbReference type="RefSeq" id="WP_011031657.1">
    <property type="nucleotide sequence ID" value="NZ_VNID01000005.1"/>
</dbReference>
<dbReference type="PDB" id="5N07">
    <property type="method" value="X-ray"/>
    <property type="resolution" value="1.95 A"/>
    <property type="chains" value="A=1-148"/>
</dbReference>
<dbReference type="PDB" id="5N08">
    <property type="method" value="X-ray"/>
    <property type="resolution" value="3.90 A"/>
    <property type="chains" value="A/B/C/D/E=1-148"/>
</dbReference>
<dbReference type="PDB" id="7B0C">
    <property type="method" value="X-ray"/>
    <property type="resolution" value="3.00 A"/>
    <property type="chains" value="A/B=1-148"/>
</dbReference>
<dbReference type="PDBsum" id="5N07"/>
<dbReference type="PDBsum" id="5N08"/>
<dbReference type="PDBsum" id="7B0C"/>
<dbReference type="SMR" id="Q9L132"/>
<dbReference type="FunCoup" id="Q9L132">
    <property type="interactions" value="16"/>
</dbReference>
<dbReference type="STRING" id="100226.gene:17765087"/>
<dbReference type="PaxDb" id="100226-SCO7427"/>
<dbReference type="KEGG" id="sco:SCO7427"/>
<dbReference type="PATRIC" id="fig|100226.15.peg.7537"/>
<dbReference type="eggNOG" id="COG1959">
    <property type="taxonomic scope" value="Bacteria"/>
</dbReference>
<dbReference type="HOGENOM" id="CLU_107144_2_0_11"/>
<dbReference type="InParanoid" id="Q9L132"/>
<dbReference type="OrthoDB" id="9795923at2"/>
<dbReference type="PhylomeDB" id="Q9L132"/>
<dbReference type="Proteomes" id="UP000001973">
    <property type="component" value="Chromosome"/>
</dbReference>
<dbReference type="GO" id="GO:0005829">
    <property type="term" value="C:cytosol"/>
    <property type="evidence" value="ECO:0000318"/>
    <property type="project" value="GO_Central"/>
</dbReference>
<dbReference type="GO" id="GO:0051537">
    <property type="term" value="F:2 iron, 2 sulfur cluster binding"/>
    <property type="evidence" value="ECO:0007669"/>
    <property type="project" value="UniProtKB-KW"/>
</dbReference>
<dbReference type="GO" id="GO:0003677">
    <property type="term" value="F:DNA binding"/>
    <property type="evidence" value="ECO:0007669"/>
    <property type="project" value="UniProtKB-KW"/>
</dbReference>
<dbReference type="GO" id="GO:0003700">
    <property type="term" value="F:DNA-binding transcription factor activity"/>
    <property type="evidence" value="ECO:0000318"/>
    <property type="project" value="GO_Central"/>
</dbReference>
<dbReference type="GO" id="GO:0046872">
    <property type="term" value="F:metal ion binding"/>
    <property type="evidence" value="ECO:0007669"/>
    <property type="project" value="UniProtKB-KW"/>
</dbReference>
<dbReference type="GO" id="GO:0006355">
    <property type="term" value="P:regulation of DNA-templated transcription"/>
    <property type="evidence" value="ECO:0000318"/>
    <property type="project" value="GO_Central"/>
</dbReference>
<dbReference type="FunFam" id="1.10.10.10:FF:000735">
    <property type="entry name" value="Rrf2 family transcriptional regulator"/>
    <property type="match status" value="1"/>
</dbReference>
<dbReference type="Gene3D" id="1.10.10.10">
    <property type="entry name" value="Winged helix-like DNA-binding domain superfamily/Winged helix DNA-binding domain"/>
    <property type="match status" value="1"/>
</dbReference>
<dbReference type="InterPro" id="IPR000944">
    <property type="entry name" value="Tscrpt_reg_Rrf2"/>
</dbReference>
<dbReference type="InterPro" id="IPR036388">
    <property type="entry name" value="WH-like_DNA-bd_sf"/>
</dbReference>
<dbReference type="InterPro" id="IPR036390">
    <property type="entry name" value="WH_DNA-bd_sf"/>
</dbReference>
<dbReference type="NCBIfam" id="TIGR00738">
    <property type="entry name" value="rrf2_super"/>
    <property type="match status" value="1"/>
</dbReference>
<dbReference type="PANTHER" id="PTHR33221:SF4">
    <property type="entry name" value="HTH-TYPE TRANSCRIPTIONAL REPRESSOR NSRR"/>
    <property type="match status" value="1"/>
</dbReference>
<dbReference type="PANTHER" id="PTHR33221">
    <property type="entry name" value="WINGED HELIX-TURN-HELIX TRANSCRIPTIONAL REGULATOR, RRF2 FAMILY"/>
    <property type="match status" value="1"/>
</dbReference>
<dbReference type="Pfam" id="PF02082">
    <property type="entry name" value="Rrf2"/>
    <property type="match status" value="1"/>
</dbReference>
<dbReference type="SUPFAM" id="SSF46785">
    <property type="entry name" value="Winged helix' DNA-binding domain"/>
    <property type="match status" value="1"/>
</dbReference>
<dbReference type="PROSITE" id="PS51197">
    <property type="entry name" value="HTH_RRF2_2"/>
    <property type="match status" value="1"/>
</dbReference>
<name>NSRR_STRCO</name>
<keyword id="KW-0001">2Fe-2S</keyword>
<keyword id="KW-0002">3D-structure</keyword>
<keyword id="KW-0238">DNA-binding</keyword>
<keyword id="KW-0408">Iron</keyword>
<keyword id="KW-0411">Iron-sulfur</keyword>
<keyword id="KW-0479">Metal-binding</keyword>
<keyword id="KW-1185">Reference proteome</keyword>
<keyword id="KW-0804">Transcription</keyword>
<keyword id="KW-0805">Transcription regulation</keyword>
<organism>
    <name type="scientific">Streptomyces coelicolor (strain ATCC BAA-471 / A3(2) / M145)</name>
    <dbReference type="NCBI Taxonomy" id="100226"/>
    <lineage>
        <taxon>Bacteria</taxon>
        <taxon>Bacillati</taxon>
        <taxon>Actinomycetota</taxon>
        <taxon>Actinomycetes</taxon>
        <taxon>Kitasatosporales</taxon>
        <taxon>Streptomycetaceae</taxon>
        <taxon>Streptomyces</taxon>
        <taxon>Streptomyces albidoflavus group</taxon>
    </lineage>
</organism>
<feature type="chain" id="PRO_0000368278" description="HTH-type transcriptional repressor NsrR">
    <location>
        <begin position="1"/>
        <end position="148"/>
    </location>
</feature>
<feature type="domain" description="HTH rrf2-type" evidence="1">
    <location>
        <begin position="2"/>
        <end position="132"/>
    </location>
</feature>
<feature type="DNA-binding region" description="H-T-H motif" evidence="1">
    <location>
        <begin position="29"/>
        <end position="52"/>
    </location>
</feature>
<feature type="binding site" evidence="3">
    <location>
        <position position="93"/>
    </location>
    <ligand>
        <name>[2Fe-2S] cluster</name>
        <dbReference type="ChEBI" id="CHEBI:190135"/>
    </ligand>
</feature>
<feature type="binding site" evidence="3">
    <location>
        <position position="99"/>
    </location>
    <ligand>
        <name>[2Fe-2S] cluster</name>
        <dbReference type="ChEBI" id="CHEBI:190135"/>
    </ligand>
</feature>
<feature type="binding site" evidence="3">
    <location>
        <position position="105"/>
    </location>
    <ligand>
        <name>[2Fe-2S] cluster</name>
        <dbReference type="ChEBI" id="CHEBI:190135"/>
    </ligand>
</feature>
<feature type="helix" evidence="4">
    <location>
        <begin position="5"/>
        <end position="18"/>
    </location>
</feature>
<feature type="helix" evidence="4">
    <location>
        <begin position="29"/>
        <end position="35"/>
    </location>
</feature>
<feature type="helix" evidence="4">
    <location>
        <begin position="40"/>
        <end position="52"/>
    </location>
</feature>
<feature type="strand" evidence="4">
    <location>
        <begin position="55"/>
        <end position="57"/>
    </location>
</feature>
<feature type="strand" evidence="5">
    <location>
        <begin position="61"/>
        <end position="63"/>
    </location>
</feature>
<feature type="strand" evidence="4">
    <location>
        <begin position="66"/>
        <end position="68"/>
    </location>
</feature>
<feature type="helix" evidence="4">
    <location>
        <begin position="70"/>
        <end position="74"/>
    </location>
</feature>
<feature type="helix" evidence="4">
    <location>
        <begin position="77"/>
        <end position="85"/>
    </location>
</feature>
<feature type="strand" evidence="4">
    <location>
        <begin position="93"/>
        <end position="97"/>
    </location>
</feature>
<feature type="turn" evidence="4">
    <location>
        <begin position="100"/>
        <end position="103"/>
    </location>
</feature>
<feature type="helix" evidence="4">
    <location>
        <begin position="106"/>
        <end position="122"/>
    </location>
</feature>
<feature type="helix" evidence="4">
    <location>
        <begin position="127"/>
        <end position="131"/>
    </location>
</feature>
<feature type="helix" evidence="4">
    <location>
        <begin position="135"/>
        <end position="141"/>
    </location>
</feature>
<proteinExistence type="evidence at protein level"/>
<sequence length="148" mass="15954">MRLTKFTDLALRSLMRLAVVRDGDEPLATREVAEVVGVPYTHAAKAITRLQHLGVVEARRGRGGGLTLTDLGRRVSVGWLVRELEGEAEVVDCEGDNPCPLRGACRLRRALRDAQEAFYAALDPLTVTDLVAAPTGPVLLGLTDRPSG</sequence>
<comment type="function">
    <text>Binds DNA; this binding is disrupted by nitrosylation upon exposure to nitric oxide (NO) and also by EDTA and iron chelators. The 2Fe-2S cluster is stable in the presence of O(2).</text>
</comment>
<comment type="cofactor">
    <cofactor evidence="2">
        <name>[2Fe-2S] cluster</name>
        <dbReference type="ChEBI" id="CHEBI:190135"/>
    </cofactor>
    <text evidence="2">Binds 1 [2Fe-2S] cluster per subunit.</text>
</comment>
<comment type="subunit">
    <text evidence="2">Homodimer.</text>
</comment>
<protein>
    <recommendedName>
        <fullName>HTH-type transcriptional repressor NsrR</fullName>
    </recommendedName>
</protein>
<accession>Q9L132</accession>
<reference key="1">
    <citation type="journal article" date="2002" name="Nature">
        <title>Complete genome sequence of the model actinomycete Streptomyces coelicolor A3(2).</title>
        <authorList>
            <person name="Bentley S.D."/>
            <person name="Chater K.F."/>
            <person name="Cerdeno-Tarraga A.-M."/>
            <person name="Challis G.L."/>
            <person name="Thomson N.R."/>
            <person name="James K.D."/>
            <person name="Harris D.E."/>
            <person name="Quail M.A."/>
            <person name="Kieser H."/>
            <person name="Harper D."/>
            <person name="Bateman A."/>
            <person name="Brown S."/>
            <person name="Chandra G."/>
            <person name="Chen C.W."/>
            <person name="Collins M."/>
            <person name="Cronin A."/>
            <person name="Fraser A."/>
            <person name="Goble A."/>
            <person name="Hidalgo J."/>
            <person name="Hornsby T."/>
            <person name="Howarth S."/>
            <person name="Huang C.-H."/>
            <person name="Kieser T."/>
            <person name="Larke L."/>
            <person name="Murphy L.D."/>
            <person name="Oliver K."/>
            <person name="O'Neil S."/>
            <person name="Rabbinowitsch E."/>
            <person name="Rajandream M.A."/>
            <person name="Rutherford K.M."/>
            <person name="Rutter S."/>
            <person name="Seeger K."/>
            <person name="Saunders D."/>
            <person name="Sharp S."/>
            <person name="Squares R."/>
            <person name="Squares S."/>
            <person name="Taylor K."/>
            <person name="Warren T."/>
            <person name="Wietzorrek A."/>
            <person name="Woodward J.R."/>
            <person name="Barrell B.G."/>
            <person name="Parkhill J."/>
            <person name="Hopwood D.A."/>
        </authorList>
    </citation>
    <scope>NUCLEOTIDE SEQUENCE [LARGE SCALE GENOMIC DNA]</scope>
    <source>
        <strain>ATCC BAA-471 / A3(2) / M145</strain>
    </source>
</reference>
<reference key="2">
    <citation type="journal article" date="2008" name="PLoS ONE">
        <title>The transcriptional repressor protein NsrR senses nitric oxide directly via a [2Fe-2S] cluster.</title>
        <authorList>
            <person name="Tucker N.P."/>
            <person name="Hicks M.G."/>
            <person name="Clarke T.A."/>
            <person name="Crack J.C."/>
            <person name="Chandra G."/>
            <person name="Le Brun N.E."/>
            <person name="Dixon R."/>
            <person name="Hutchings M.I."/>
        </authorList>
    </citation>
    <scope>DNA-BINDING</scope>
    <scope>COFACTOR</scope>
    <scope>SUBUNIT</scope>
    <source>
        <strain>ATCC BAA-471 / A3(2) / M145</strain>
    </source>
</reference>
<gene>
    <name type="primary">nsrR</name>
    <name type="ordered locus">SCO7427</name>
    <name type="ORF">SC6D11.23</name>
</gene>
<evidence type="ECO:0000255" key="1">
    <source>
        <dbReference type="PROSITE-ProRule" id="PRU00540"/>
    </source>
</evidence>
<evidence type="ECO:0000269" key="2">
    <source>
    </source>
</evidence>
<evidence type="ECO:0000305" key="3"/>
<evidence type="ECO:0007829" key="4">
    <source>
        <dbReference type="PDB" id="5N07"/>
    </source>
</evidence>
<evidence type="ECO:0007829" key="5">
    <source>
        <dbReference type="PDB" id="7B0C"/>
    </source>
</evidence>